<feature type="chain" id="PRO_0000080998" description="Accessory gene regulator protein A">
    <location>
        <begin position="1"/>
        <end position="238"/>
    </location>
</feature>
<feature type="domain" description="Response regulatory" evidence="3">
    <location>
        <begin position="2"/>
        <end position="125"/>
    </location>
</feature>
<feature type="domain" description="HTH LytTR-type" evidence="2">
    <location>
        <begin position="143"/>
        <end position="238"/>
    </location>
</feature>
<feature type="modified residue" description="4-aspartylphosphate" evidence="3">
    <location>
        <position position="59"/>
    </location>
</feature>
<comment type="function">
    <text evidence="1">Required for high-level post-exponential phase expression of a series of secreted proteins.</text>
</comment>
<comment type="subcellular location">
    <subcellularLocation>
        <location evidence="1">Cytoplasm</location>
    </subcellularLocation>
</comment>
<dbReference type="EMBL" id="BX571856">
    <property type="protein sequence ID" value="CAG41107.1"/>
    <property type="molecule type" value="Genomic_DNA"/>
</dbReference>
<dbReference type="RefSeq" id="WP_000688492.1">
    <property type="nucleotide sequence ID" value="NC_002952.2"/>
</dbReference>
<dbReference type="SMR" id="Q6GF33"/>
<dbReference type="KEGG" id="sar:SAR2126"/>
<dbReference type="HOGENOM" id="CLU_000445_14_6_9"/>
<dbReference type="PRO" id="PR:Q6GF33"/>
<dbReference type="Proteomes" id="UP000000596">
    <property type="component" value="Chromosome"/>
</dbReference>
<dbReference type="GO" id="GO:0005737">
    <property type="term" value="C:cytoplasm"/>
    <property type="evidence" value="ECO:0007669"/>
    <property type="project" value="UniProtKB-SubCell"/>
</dbReference>
<dbReference type="GO" id="GO:0003677">
    <property type="term" value="F:DNA binding"/>
    <property type="evidence" value="ECO:0007669"/>
    <property type="project" value="UniProtKB-KW"/>
</dbReference>
<dbReference type="GO" id="GO:0000156">
    <property type="term" value="F:phosphorelay response regulator activity"/>
    <property type="evidence" value="ECO:0007669"/>
    <property type="project" value="InterPro"/>
</dbReference>
<dbReference type="CDD" id="cd17533">
    <property type="entry name" value="REC_LytTR_AgrA-like"/>
    <property type="match status" value="1"/>
</dbReference>
<dbReference type="FunFam" id="2.40.50.1020:FF:000005">
    <property type="entry name" value="Accessory gene regulator A"/>
    <property type="match status" value="1"/>
</dbReference>
<dbReference type="Gene3D" id="3.40.50.2300">
    <property type="match status" value="1"/>
</dbReference>
<dbReference type="Gene3D" id="2.40.50.1020">
    <property type="entry name" value="LytTr DNA-binding domain"/>
    <property type="match status" value="1"/>
</dbReference>
<dbReference type="InterPro" id="IPR011006">
    <property type="entry name" value="CheY-like_superfamily"/>
</dbReference>
<dbReference type="InterPro" id="IPR046947">
    <property type="entry name" value="LytR-like"/>
</dbReference>
<dbReference type="InterPro" id="IPR007492">
    <property type="entry name" value="LytTR_DNA-bd_dom"/>
</dbReference>
<dbReference type="InterPro" id="IPR001789">
    <property type="entry name" value="Sig_transdc_resp-reg_receiver"/>
</dbReference>
<dbReference type="NCBIfam" id="NF046049">
    <property type="entry name" value="quorum_RR_AgrA"/>
    <property type="match status" value="1"/>
</dbReference>
<dbReference type="PANTHER" id="PTHR37299:SF3">
    <property type="entry name" value="STAGE 0 SPORULATION PROTEIN A HOMOLOG"/>
    <property type="match status" value="1"/>
</dbReference>
<dbReference type="PANTHER" id="PTHR37299">
    <property type="entry name" value="TRANSCRIPTIONAL REGULATOR-RELATED"/>
    <property type="match status" value="1"/>
</dbReference>
<dbReference type="Pfam" id="PF04397">
    <property type="entry name" value="LytTR"/>
    <property type="match status" value="1"/>
</dbReference>
<dbReference type="Pfam" id="PF00072">
    <property type="entry name" value="Response_reg"/>
    <property type="match status" value="1"/>
</dbReference>
<dbReference type="SMART" id="SM00850">
    <property type="entry name" value="LytTR"/>
    <property type="match status" value="1"/>
</dbReference>
<dbReference type="SMART" id="SM00448">
    <property type="entry name" value="REC"/>
    <property type="match status" value="1"/>
</dbReference>
<dbReference type="SUPFAM" id="SSF52172">
    <property type="entry name" value="CheY-like"/>
    <property type="match status" value="1"/>
</dbReference>
<dbReference type="PROSITE" id="PS50930">
    <property type="entry name" value="HTH_LYTTR"/>
    <property type="match status" value="1"/>
</dbReference>
<dbReference type="PROSITE" id="PS50110">
    <property type="entry name" value="RESPONSE_REGULATORY"/>
    <property type="match status" value="1"/>
</dbReference>
<accession>Q6GF33</accession>
<gene>
    <name type="primary">agrA</name>
    <name type="ordered locus">SAR2126</name>
</gene>
<proteinExistence type="inferred from homology"/>
<protein>
    <recommendedName>
        <fullName>Accessory gene regulator protein A</fullName>
    </recommendedName>
</protein>
<name>AGRA_STAAR</name>
<evidence type="ECO:0000250" key="1"/>
<evidence type="ECO:0000255" key="2">
    <source>
        <dbReference type="PROSITE-ProRule" id="PRU00112"/>
    </source>
</evidence>
<evidence type="ECO:0000255" key="3">
    <source>
        <dbReference type="PROSITE-ProRule" id="PRU00169"/>
    </source>
</evidence>
<sequence>MKIFICEDDPKQRENMVTIIKNYIMIEEKPMEIALATDNPYEVLEQAKNMNDIGCYFLDIQLSTDINGIKLGSEIRKHDPVGNIIFVTSHSELTYLTFVYKVAAMDFIFKDDPAELRTRIIDCLETAHTRLQLLSKDNSVETIELKRGSNSVYVQYDDIMFFESSTKSHRLIAHLDNRQIEFYGNLKELSQLDDRFFRCHNSFVVNRHNIESIDSKERIVYFKNKEHCYASVRNVKKI</sequence>
<organism>
    <name type="scientific">Staphylococcus aureus (strain MRSA252)</name>
    <dbReference type="NCBI Taxonomy" id="282458"/>
    <lineage>
        <taxon>Bacteria</taxon>
        <taxon>Bacillati</taxon>
        <taxon>Bacillota</taxon>
        <taxon>Bacilli</taxon>
        <taxon>Bacillales</taxon>
        <taxon>Staphylococcaceae</taxon>
        <taxon>Staphylococcus</taxon>
    </lineage>
</organism>
<keyword id="KW-0010">Activator</keyword>
<keyword id="KW-0963">Cytoplasm</keyword>
<keyword id="KW-0238">DNA-binding</keyword>
<keyword id="KW-0597">Phosphoprotein</keyword>
<keyword id="KW-0804">Transcription</keyword>
<keyword id="KW-0805">Transcription regulation</keyword>
<keyword id="KW-0902">Two-component regulatory system</keyword>
<reference key="1">
    <citation type="journal article" date="2004" name="Proc. Natl. Acad. Sci. U.S.A.">
        <title>Complete genomes of two clinical Staphylococcus aureus strains: evidence for the rapid evolution of virulence and drug resistance.</title>
        <authorList>
            <person name="Holden M.T.G."/>
            <person name="Feil E.J."/>
            <person name="Lindsay J.A."/>
            <person name="Peacock S.J."/>
            <person name="Day N.P.J."/>
            <person name="Enright M.C."/>
            <person name="Foster T.J."/>
            <person name="Moore C.E."/>
            <person name="Hurst L."/>
            <person name="Atkin R."/>
            <person name="Barron A."/>
            <person name="Bason N."/>
            <person name="Bentley S.D."/>
            <person name="Chillingworth C."/>
            <person name="Chillingworth T."/>
            <person name="Churcher C."/>
            <person name="Clark L."/>
            <person name="Corton C."/>
            <person name="Cronin A."/>
            <person name="Doggett J."/>
            <person name="Dowd L."/>
            <person name="Feltwell T."/>
            <person name="Hance Z."/>
            <person name="Harris B."/>
            <person name="Hauser H."/>
            <person name="Holroyd S."/>
            <person name="Jagels K."/>
            <person name="James K.D."/>
            <person name="Lennard N."/>
            <person name="Line A."/>
            <person name="Mayes R."/>
            <person name="Moule S."/>
            <person name="Mungall K."/>
            <person name="Ormond D."/>
            <person name="Quail M.A."/>
            <person name="Rabbinowitsch E."/>
            <person name="Rutherford K.M."/>
            <person name="Sanders M."/>
            <person name="Sharp S."/>
            <person name="Simmonds M."/>
            <person name="Stevens K."/>
            <person name="Whitehead S."/>
            <person name="Barrell B.G."/>
            <person name="Spratt B.G."/>
            <person name="Parkhill J."/>
        </authorList>
    </citation>
    <scope>NUCLEOTIDE SEQUENCE [LARGE SCALE GENOMIC DNA]</scope>
    <source>
        <strain>MRSA252</strain>
    </source>
</reference>